<proteinExistence type="inferred from homology"/>
<gene>
    <name type="primary">glxC</name>
    <name type="ordered locus">R00088</name>
    <name type="ORF">SMc02611</name>
</gene>
<name>GLXC_RHIME</name>
<keyword id="KW-1185">Reference proteome</keyword>
<reference key="1">
    <citation type="submission" date="1998-03" db="EMBL/GenBank/DDBJ databases">
        <authorList>
            <person name="Powers E.L."/>
            <person name="Vuyyuru V."/>
            <person name="Kahn M.L."/>
        </authorList>
    </citation>
    <scope>NUCLEOTIDE SEQUENCE [GENOMIC DNA]</scope>
    <source>
        <strain>1021</strain>
    </source>
</reference>
<reference key="2">
    <citation type="journal article" date="2001" name="Proc. Natl. Acad. Sci. U.S.A.">
        <title>Analysis of the chromosome sequence of the legume symbiont Sinorhizobium meliloti strain 1021.</title>
        <authorList>
            <person name="Capela D."/>
            <person name="Barloy-Hubler F."/>
            <person name="Gouzy J."/>
            <person name="Bothe G."/>
            <person name="Ampe F."/>
            <person name="Batut J."/>
            <person name="Boistard P."/>
            <person name="Becker A."/>
            <person name="Boutry M."/>
            <person name="Cadieu E."/>
            <person name="Dreano S."/>
            <person name="Gloux S."/>
            <person name="Godrie T."/>
            <person name="Goffeau A."/>
            <person name="Kahn D."/>
            <person name="Kiss E."/>
            <person name="Lelaure V."/>
            <person name="Masuy D."/>
            <person name="Pohl T."/>
            <person name="Portetelle D."/>
            <person name="Puehler A."/>
            <person name="Purnelle B."/>
            <person name="Ramsperger U."/>
            <person name="Renard C."/>
            <person name="Thebault P."/>
            <person name="Vandenbol M."/>
            <person name="Weidner S."/>
            <person name="Galibert F."/>
        </authorList>
    </citation>
    <scope>NUCLEOTIDE SEQUENCE [LARGE SCALE GENOMIC DNA]</scope>
    <source>
        <strain>1021</strain>
    </source>
</reference>
<reference key="3">
    <citation type="journal article" date="2001" name="Science">
        <title>The composite genome of the legume symbiont Sinorhizobium meliloti.</title>
        <authorList>
            <person name="Galibert F."/>
            <person name="Finan T.M."/>
            <person name="Long S.R."/>
            <person name="Puehler A."/>
            <person name="Abola P."/>
            <person name="Ampe F."/>
            <person name="Barloy-Hubler F."/>
            <person name="Barnett M.J."/>
            <person name="Becker A."/>
            <person name="Boistard P."/>
            <person name="Bothe G."/>
            <person name="Boutry M."/>
            <person name="Bowser L."/>
            <person name="Buhrmester J."/>
            <person name="Cadieu E."/>
            <person name="Capela D."/>
            <person name="Chain P."/>
            <person name="Cowie A."/>
            <person name="Davis R.W."/>
            <person name="Dreano S."/>
            <person name="Federspiel N.A."/>
            <person name="Fisher R.F."/>
            <person name="Gloux S."/>
            <person name="Godrie T."/>
            <person name="Goffeau A."/>
            <person name="Golding B."/>
            <person name="Gouzy J."/>
            <person name="Gurjal M."/>
            <person name="Hernandez-Lucas I."/>
            <person name="Hong A."/>
            <person name="Huizar L."/>
            <person name="Hyman R.W."/>
            <person name="Jones T."/>
            <person name="Kahn D."/>
            <person name="Kahn M.L."/>
            <person name="Kalman S."/>
            <person name="Keating D.H."/>
            <person name="Kiss E."/>
            <person name="Komp C."/>
            <person name="Lelaure V."/>
            <person name="Masuy D."/>
            <person name="Palm C."/>
            <person name="Peck M.C."/>
            <person name="Pohl T.M."/>
            <person name="Portetelle D."/>
            <person name="Purnelle B."/>
            <person name="Ramsperger U."/>
            <person name="Surzycki R."/>
            <person name="Thebault P."/>
            <person name="Vandenbol M."/>
            <person name="Vorhoelter F.J."/>
            <person name="Weidner S."/>
            <person name="Wells D.H."/>
            <person name="Wong K."/>
            <person name="Yeh K.-C."/>
            <person name="Batut J."/>
        </authorList>
    </citation>
    <scope>NUCLEOTIDE SEQUENCE [LARGE SCALE GENOMIC DNA]</scope>
    <source>
        <strain>1021</strain>
    </source>
</reference>
<dbReference type="EMBL" id="AF055582">
    <property type="protein sequence ID" value="AAC62221.1"/>
    <property type="molecule type" value="Genomic_DNA"/>
</dbReference>
<dbReference type="EMBL" id="AL591688">
    <property type="protein sequence ID" value="CAC41475.1"/>
    <property type="molecule type" value="Genomic_DNA"/>
</dbReference>
<dbReference type="RefSeq" id="NP_384194.1">
    <property type="nucleotide sequence ID" value="NC_003047.1"/>
</dbReference>
<dbReference type="RefSeq" id="WP_003536329.1">
    <property type="nucleotide sequence ID" value="NC_003047.1"/>
</dbReference>
<dbReference type="SMR" id="O87391"/>
<dbReference type="EnsemblBacteria" id="CAC41475">
    <property type="protein sequence ID" value="CAC41475"/>
    <property type="gene ID" value="SMc02611"/>
</dbReference>
<dbReference type="KEGG" id="sme:SMc02611"/>
<dbReference type="PATRIC" id="fig|266834.11.peg.1445"/>
<dbReference type="eggNOG" id="COG2218">
    <property type="taxonomic scope" value="Bacteria"/>
</dbReference>
<dbReference type="HOGENOM" id="CLU_078510_0_0_5"/>
<dbReference type="OrthoDB" id="287000at2"/>
<dbReference type="Proteomes" id="UP000001976">
    <property type="component" value="Chromosome"/>
</dbReference>
<dbReference type="GO" id="GO:0016491">
    <property type="term" value="F:oxidoreductase activity"/>
    <property type="evidence" value="ECO:0007669"/>
    <property type="project" value="InterPro"/>
</dbReference>
<dbReference type="CDD" id="cd00504">
    <property type="entry name" value="GXGXG"/>
    <property type="match status" value="1"/>
</dbReference>
<dbReference type="Gene3D" id="2.160.20.60">
    <property type="entry name" value="Glutamate synthase, alpha subunit, C-terminal domain"/>
    <property type="match status" value="1"/>
</dbReference>
<dbReference type="InterPro" id="IPR002489">
    <property type="entry name" value="Glu_synth_asu_C"/>
</dbReference>
<dbReference type="InterPro" id="IPR036485">
    <property type="entry name" value="Glu_synth_asu_C_sf"/>
</dbReference>
<dbReference type="InterPro" id="IPR012061">
    <property type="entry name" value="Glu_synth_lsu_3"/>
</dbReference>
<dbReference type="PANTHER" id="PTHR39673">
    <property type="entry name" value="TUNGSTEN FORMYLMETHANOFURAN DEHYDROGENASE, SUBUNIT C (FWDC)"/>
    <property type="match status" value="1"/>
</dbReference>
<dbReference type="PANTHER" id="PTHR39673:SF5">
    <property type="entry name" value="TUNGSTEN-CONTAINING FORMYLMETHANOFURAN DEHYDROGENASE 2 SUBUNIT C"/>
    <property type="match status" value="1"/>
</dbReference>
<dbReference type="Pfam" id="PF01493">
    <property type="entry name" value="GXGXG"/>
    <property type="match status" value="1"/>
</dbReference>
<dbReference type="PIRSF" id="PIRSF006519">
    <property type="entry name" value="GOGAT_dom3"/>
    <property type="match status" value="1"/>
</dbReference>
<dbReference type="SUPFAM" id="SSF69336">
    <property type="entry name" value="Alpha subunit of glutamate synthase, C-terminal domain"/>
    <property type="match status" value="1"/>
</dbReference>
<sequence length="228" mass="24009">MPVIDLATTPLREFNRSLHNIQQGSNDLSYEVANPRGSHAVAVGIDGPVVVDVNGSVGYYCAGMNDGGTVTVHGSAGPGVAENMMSGKVVIEGDASQYAGATGRGGLLVIKGNAASRCGISMKGIDIVVHGNIGHMSAFMGQSGHLVVLGDAGDALGDSLYEAKLFVRGTVKSLGADCIEKEMRPEHLQKLAELLEKADVKDVRPEEFKRYGSARKLYNFNIDNADAY</sequence>
<protein>
    <recommendedName>
        <fullName>Protein GlxC</fullName>
    </recommendedName>
</protein>
<accession>O87391</accession>
<comment type="similarity">
    <text evidence="1">Belongs to the FwdC/FmdC family.</text>
</comment>
<feature type="chain" id="PRO_0000144199" description="Protein GlxC">
    <location>
        <begin position="1"/>
        <end position="228"/>
    </location>
</feature>
<organism>
    <name type="scientific">Rhizobium meliloti (strain 1021)</name>
    <name type="common">Ensifer meliloti</name>
    <name type="synonym">Sinorhizobium meliloti</name>
    <dbReference type="NCBI Taxonomy" id="266834"/>
    <lineage>
        <taxon>Bacteria</taxon>
        <taxon>Pseudomonadati</taxon>
        <taxon>Pseudomonadota</taxon>
        <taxon>Alphaproteobacteria</taxon>
        <taxon>Hyphomicrobiales</taxon>
        <taxon>Rhizobiaceae</taxon>
        <taxon>Sinorhizobium/Ensifer group</taxon>
        <taxon>Sinorhizobium</taxon>
    </lineage>
</organism>
<evidence type="ECO:0000305" key="1"/>